<dbReference type="EC" id="3.5.2.3" evidence="1"/>
<dbReference type="EMBL" id="BX571865">
    <property type="protein sequence ID" value="CAE14112.1"/>
    <property type="molecule type" value="Genomic_DNA"/>
</dbReference>
<dbReference type="RefSeq" id="WP_011146096.1">
    <property type="nucleotide sequence ID" value="NC_005126.1"/>
</dbReference>
<dbReference type="SMR" id="Q7N5W0"/>
<dbReference type="STRING" id="243265.plu1819"/>
<dbReference type="MEROPS" id="M38.A02"/>
<dbReference type="GeneID" id="48848096"/>
<dbReference type="KEGG" id="plu:plu1819"/>
<dbReference type="eggNOG" id="COG0418">
    <property type="taxonomic scope" value="Bacteria"/>
</dbReference>
<dbReference type="HOGENOM" id="CLU_041558_1_0_6"/>
<dbReference type="OrthoDB" id="9808095at2"/>
<dbReference type="UniPathway" id="UPA00070">
    <property type="reaction ID" value="UER00117"/>
</dbReference>
<dbReference type="Proteomes" id="UP000002514">
    <property type="component" value="Chromosome"/>
</dbReference>
<dbReference type="GO" id="GO:0005829">
    <property type="term" value="C:cytosol"/>
    <property type="evidence" value="ECO:0007669"/>
    <property type="project" value="TreeGrafter"/>
</dbReference>
<dbReference type="GO" id="GO:0004151">
    <property type="term" value="F:dihydroorotase activity"/>
    <property type="evidence" value="ECO:0007669"/>
    <property type="project" value="UniProtKB-UniRule"/>
</dbReference>
<dbReference type="GO" id="GO:0008270">
    <property type="term" value="F:zinc ion binding"/>
    <property type="evidence" value="ECO:0007669"/>
    <property type="project" value="UniProtKB-UniRule"/>
</dbReference>
<dbReference type="GO" id="GO:0006207">
    <property type="term" value="P:'de novo' pyrimidine nucleobase biosynthetic process"/>
    <property type="evidence" value="ECO:0007669"/>
    <property type="project" value="TreeGrafter"/>
</dbReference>
<dbReference type="GO" id="GO:0044205">
    <property type="term" value="P:'de novo' UMP biosynthetic process"/>
    <property type="evidence" value="ECO:0007669"/>
    <property type="project" value="UniProtKB-UniRule"/>
</dbReference>
<dbReference type="CDD" id="cd01294">
    <property type="entry name" value="DHOase"/>
    <property type="match status" value="1"/>
</dbReference>
<dbReference type="FunFam" id="3.20.20.140:FF:000006">
    <property type="entry name" value="Dihydroorotase"/>
    <property type="match status" value="1"/>
</dbReference>
<dbReference type="Gene3D" id="3.20.20.140">
    <property type="entry name" value="Metal-dependent hydrolases"/>
    <property type="match status" value="1"/>
</dbReference>
<dbReference type="HAMAP" id="MF_00219">
    <property type="entry name" value="PyrC_classII"/>
    <property type="match status" value="1"/>
</dbReference>
<dbReference type="InterPro" id="IPR006680">
    <property type="entry name" value="Amidohydro-rel"/>
</dbReference>
<dbReference type="InterPro" id="IPR004721">
    <property type="entry name" value="DHOdimr"/>
</dbReference>
<dbReference type="InterPro" id="IPR002195">
    <property type="entry name" value="Dihydroorotase_CS"/>
</dbReference>
<dbReference type="InterPro" id="IPR032466">
    <property type="entry name" value="Metal_Hydrolase"/>
</dbReference>
<dbReference type="NCBIfam" id="TIGR00856">
    <property type="entry name" value="pyrC_dimer"/>
    <property type="match status" value="1"/>
</dbReference>
<dbReference type="PANTHER" id="PTHR43137">
    <property type="entry name" value="DIHYDROOROTASE"/>
    <property type="match status" value="1"/>
</dbReference>
<dbReference type="PANTHER" id="PTHR43137:SF1">
    <property type="entry name" value="DIHYDROOROTASE"/>
    <property type="match status" value="1"/>
</dbReference>
<dbReference type="Pfam" id="PF01979">
    <property type="entry name" value="Amidohydro_1"/>
    <property type="match status" value="1"/>
</dbReference>
<dbReference type="PIRSF" id="PIRSF001237">
    <property type="entry name" value="DHOdimr"/>
    <property type="match status" value="1"/>
</dbReference>
<dbReference type="SUPFAM" id="SSF51556">
    <property type="entry name" value="Metallo-dependent hydrolases"/>
    <property type="match status" value="1"/>
</dbReference>
<dbReference type="PROSITE" id="PS00482">
    <property type="entry name" value="DIHYDROOROTASE_1"/>
    <property type="match status" value="1"/>
</dbReference>
<dbReference type="PROSITE" id="PS00483">
    <property type="entry name" value="DIHYDROOROTASE_2"/>
    <property type="match status" value="1"/>
</dbReference>
<accession>Q7N5W0</accession>
<keyword id="KW-0378">Hydrolase</keyword>
<keyword id="KW-0479">Metal-binding</keyword>
<keyword id="KW-0665">Pyrimidine biosynthesis</keyword>
<keyword id="KW-1185">Reference proteome</keyword>
<keyword id="KW-0862">Zinc</keyword>
<gene>
    <name evidence="1" type="primary">pyrC</name>
    <name type="ordered locus">plu1819</name>
</gene>
<feature type="chain" id="PRO_1000024028" description="Dihydroorotase">
    <location>
        <begin position="1"/>
        <end position="350"/>
    </location>
</feature>
<feature type="active site" evidence="1">
    <location>
        <position position="251"/>
    </location>
</feature>
<feature type="binding site" evidence="1">
    <location>
        <position position="17"/>
    </location>
    <ligand>
        <name>Zn(2+)</name>
        <dbReference type="ChEBI" id="CHEBI:29105"/>
        <label>1</label>
    </ligand>
</feature>
<feature type="binding site" evidence="1">
    <location>
        <begin position="19"/>
        <end position="21"/>
    </location>
    <ligand>
        <name>substrate</name>
    </ligand>
</feature>
<feature type="binding site" evidence="1">
    <location>
        <position position="19"/>
    </location>
    <ligand>
        <name>Zn(2+)</name>
        <dbReference type="ChEBI" id="CHEBI:29105"/>
        <label>1</label>
    </ligand>
</feature>
<feature type="binding site" evidence="1">
    <location>
        <position position="45"/>
    </location>
    <ligand>
        <name>substrate</name>
    </ligand>
</feature>
<feature type="binding site" description="via carbamate group" evidence="1">
    <location>
        <position position="103"/>
    </location>
    <ligand>
        <name>Zn(2+)</name>
        <dbReference type="ChEBI" id="CHEBI:29105"/>
        <label>1</label>
    </ligand>
</feature>
<feature type="binding site" description="via carbamate group" evidence="1">
    <location>
        <position position="103"/>
    </location>
    <ligand>
        <name>Zn(2+)</name>
        <dbReference type="ChEBI" id="CHEBI:29105"/>
        <label>2</label>
    </ligand>
</feature>
<feature type="binding site" evidence="1">
    <location>
        <position position="140"/>
    </location>
    <ligand>
        <name>substrate</name>
    </ligand>
</feature>
<feature type="binding site" evidence="1">
    <location>
        <position position="140"/>
    </location>
    <ligand>
        <name>Zn(2+)</name>
        <dbReference type="ChEBI" id="CHEBI:29105"/>
        <label>2</label>
    </ligand>
</feature>
<feature type="binding site" evidence="1">
    <location>
        <position position="178"/>
    </location>
    <ligand>
        <name>Zn(2+)</name>
        <dbReference type="ChEBI" id="CHEBI:29105"/>
        <label>2</label>
    </ligand>
</feature>
<feature type="binding site" evidence="1">
    <location>
        <position position="223"/>
    </location>
    <ligand>
        <name>substrate</name>
    </ligand>
</feature>
<feature type="binding site" evidence="1">
    <location>
        <position position="251"/>
    </location>
    <ligand>
        <name>Zn(2+)</name>
        <dbReference type="ChEBI" id="CHEBI:29105"/>
        <label>1</label>
    </ligand>
</feature>
<feature type="binding site" evidence="1">
    <location>
        <position position="255"/>
    </location>
    <ligand>
        <name>substrate</name>
    </ligand>
</feature>
<feature type="binding site" evidence="1">
    <location>
        <position position="267"/>
    </location>
    <ligand>
        <name>substrate</name>
    </ligand>
</feature>
<feature type="modified residue" description="N6-carboxylysine" evidence="1">
    <location>
        <position position="103"/>
    </location>
</feature>
<evidence type="ECO:0000255" key="1">
    <source>
        <dbReference type="HAMAP-Rule" id="MF_00219"/>
    </source>
</evidence>
<comment type="function">
    <text evidence="1">Catalyzes the reversible cyclization of carbamoyl aspartate to dihydroorotate.</text>
</comment>
<comment type="catalytic activity">
    <reaction evidence="1">
        <text>(S)-dihydroorotate + H2O = N-carbamoyl-L-aspartate + H(+)</text>
        <dbReference type="Rhea" id="RHEA:24296"/>
        <dbReference type="ChEBI" id="CHEBI:15377"/>
        <dbReference type="ChEBI" id="CHEBI:15378"/>
        <dbReference type="ChEBI" id="CHEBI:30864"/>
        <dbReference type="ChEBI" id="CHEBI:32814"/>
        <dbReference type="EC" id="3.5.2.3"/>
    </reaction>
</comment>
<comment type="cofactor">
    <cofactor evidence="1">
        <name>Zn(2+)</name>
        <dbReference type="ChEBI" id="CHEBI:29105"/>
    </cofactor>
    <text evidence="1">Binds 2 Zn(2+) ions per subunit.</text>
</comment>
<comment type="pathway">
    <text evidence="1">Pyrimidine metabolism; UMP biosynthesis via de novo pathway; (S)-dihydroorotate from bicarbonate: step 3/3.</text>
</comment>
<comment type="subunit">
    <text evidence="1">Homodimer.</text>
</comment>
<comment type="similarity">
    <text evidence="1">Belongs to the metallo-dependent hydrolases superfamily. DHOase family. Class II DHOase subfamily.</text>
</comment>
<name>PYRC_PHOLL</name>
<sequence length="350" mass="39144">MTTESYTIKIRRPDDWHIHFRDGEMLRTVVPYTSHYFGRAIVMPNLLTPITEVVSAKAYRGRILAAIPEGDNFQPLMTCYLTDTTESSQIEIGYKEGIFTACKLYPANATTNSSHGVSDIKNIYPLLAVMEKLGMPLLVHGEVTASHIDIFDREARFIEQVMEPLRNQFPALKVVFEHITTKEAAQYVLEGNNNLAATLTPQHLMFNRNHMLVGGIRPHLYCLPVLKRNVHQEALRAAVASGCDRFFLGTDSAPHAQQKKESSCGCAGVFNAPSALPAYATVFEEMNALPHFEAFCSLNGPKFYGLPVNEGFIELTRKPSTVIEHIDCNNEKLIPFLAGEDARWDVKVTD</sequence>
<protein>
    <recommendedName>
        <fullName evidence="1">Dihydroorotase</fullName>
        <shortName evidence="1">DHOase</shortName>
        <ecNumber evidence="1">3.5.2.3</ecNumber>
    </recommendedName>
</protein>
<organism>
    <name type="scientific">Photorhabdus laumondii subsp. laumondii (strain DSM 15139 / CIP 105565 / TT01)</name>
    <name type="common">Photorhabdus luminescens subsp. laumondii</name>
    <dbReference type="NCBI Taxonomy" id="243265"/>
    <lineage>
        <taxon>Bacteria</taxon>
        <taxon>Pseudomonadati</taxon>
        <taxon>Pseudomonadota</taxon>
        <taxon>Gammaproteobacteria</taxon>
        <taxon>Enterobacterales</taxon>
        <taxon>Morganellaceae</taxon>
        <taxon>Photorhabdus</taxon>
    </lineage>
</organism>
<proteinExistence type="inferred from homology"/>
<reference key="1">
    <citation type="journal article" date="2003" name="Nat. Biotechnol.">
        <title>The genome sequence of the entomopathogenic bacterium Photorhabdus luminescens.</title>
        <authorList>
            <person name="Duchaud E."/>
            <person name="Rusniok C."/>
            <person name="Frangeul L."/>
            <person name="Buchrieser C."/>
            <person name="Givaudan A."/>
            <person name="Taourit S."/>
            <person name="Bocs S."/>
            <person name="Boursaux-Eude C."/>
            <person name="Chandler M."/>
            <person name="Charles J.-F."/>
            <person name="Dassa E."/>
            <person name="Derose R."/>
            <person name="Derzelle S."/>
            <person name="Freyssinet G."/>
            <person name="Gaudriault S."/>
            <person name="Medigue C."/>
            <person name="Lanois A."/>
            <person name="Powell K."/>
            <person name="Siguier P."/>
            <person name="Vincent R."/>
            <person name="Wingate V."/>
            <person name="Zouine M."/>
            <person name="Glaser P."/>
            <person name="Boemare N."/>
            <person name="Danchin A."/>
            <person name="Kunst F."/>
        </authorList>
    </citation>
    <scope>NUCLEOTIDE SEQUENCE [LARGE SCALE GENOMIC DNA]</scope>
    <source>
        <strain>DSM 15139 / CIP 105565 / TT01</strain>
    </source>
</reference>